<dbReference type="EC" id="7.1.1.-" evidence="1"/>
<dbReference type="EMBL" id="CP000872">
    <property type="protein sequence ID" value="ABX61884.1"/>
    <property type="molecule type" value="Genomic_DNA"/>
</dbReference>
<dbReference type="RefSeq" id="WP_002967574.1">
    <property type="nucleotide sequence ID" value="NC_010103.1"/>
</dbReference>
<dbReference type="SMR" id="A9MAI1"/>
<dbReference type="GeneID" id="55590516"/>
<dbReference type="KEGG" id="bcs:BCAN_A0819"/>
<dbReference type="HOGENOM" id="CLU_042628_2_1_5"/>
<dbReference type="PhylomeDB" id="A9MAI1"/>
<dbReference type="Proteomes" id="UP000001385">
    <property type="component" value="Chromosome I"/>
</dbReference>
<dbReference type="GO" id="GO:0005886">
    <property type="term" value="C:plasma membrane"/>
    <property type="evidence" value="ECO:0007669"/>
    <property type="project" value="UniProtKB-SubCell"/>
</dbReference>
<dbReference type="GO" id="GO:0008137">
    <property type="term" value="F:NADH dehydrogenase (ubiquinone) activity"/>
    <property type="evidence" value="ECO:0007669"/>
    <property type="project" value="InterPro"/>
</dbReference>
<dbReference type="GO" id="GO:0050136">
    <property type="term" value="F:NADH:ubiquinone reductase (non-electrogenic) activity"/>
    <property type="evidence" value="ECO:0007669"/>
    <property type="project" value="UniProtKB-UniRule"/>
</dbReference>
<dbReference type="GO" id="GO:0048038">
    <property type="term" value="F:quinone binding"/>
    <property type="evidence" value="ECO:0007669"/>
    <property type="project" value="UniProtKB-KW"/>
</dbReference>
<dbReference type="Gene3D" id="3.30.460.80">
    <property type="entry name" value="NADH:ubiquinone oxidoreductase, 30kDa subunit"/>
    <property type="match status" value="1"/>
</dbReference>
<dbReference type="HAMAP" id="MF_01357">
    <property type="entry name" value="NDH1_NuoC"/>
    <property type="match status" value="1"/>
</dbReference>
<dbReference type="InterPro" id="IPR010218">
    <property type="entry name" value="NADH_DH_suC"/>
</dbReference>
<dbReference type="InterPro" id="IPR037232">
    <property type="entry name" value="NADH_quin_OxRdtase_su_C/D-like"/>
</dbReference>
<dbReference type="InterPro" id="IPR001268">
    <property type="entry name" value="NADH_UbQ_OxRdtase_30kDa_su"/>
</dbReference>
<dbReference type="InterPro" id="IPR020396">
    <property type="entry name" value="NADH_UbQ_OxRdtase_CS"/>
</dbReference>
<dbReference type="NCBIfam" id="TIGR01961">
    <property type="entry name" value="NuoC_fam"/>
    <property type="match status" value="1"/>
</dbReference>
<dbReference type="NCBIfam" id="NF004730">
    <property type="entry name" value="PRK06074.1-1"/>
    <property type="match status" value="1"/>
</dbReference>
<dbReference type="NCBIfam" id="NF004733">
    <property type="entry name" value="PRK06074.1-5"/>
    <property type="match status" value="1"/>
</dbReference>
<dbReference type="PANTHER" id="PTHR10884:SF14">
    <property type="entry name" value="NADH DEHYDROGENASE [UBIQUINONE] IRON-SULFUR PROTEIN 3, MITOCHONDRIAL"/>
    <property type="match status" value="1"/>
</dbReference>
<dbReference type="PANTHER" id="PTHR10884">
    <property type="entry name" value="NADH DEHYDROGENASE UBIQUINONE IRON-SULFUR PROTEIN 3"/>
    <property type="match status" value="1"/>
</dbReference>
<dbReference type="Pfam" id="PF00329">
    <property type="entry name" value="Complex1_30kDa"/>
    <property type="match status" value="1"/>
</dbReference>
<dbReference type="SUPFAM" id="SSF143243">
    <property type="entry name" value="Nqo5-like"/>
    <property type="match status" value="1"/>
</dbReference>
<dbReference type="PROSITE" id="PS00542">
    <property type="entry name" value="COMPLEX1_30K"/>
    <property type="match status" value="1"/>
</dbReference>
<proteinExistence type="inferred from homology"/>
<protein>
    <recommendedName>
        <fullName evidence="1">NADH-quinone oxidoreductase subunit C</fullName>
        <ecNumber evidence="1">7.1.1.-</ecNumber>
    </recommendedName>
    <alternativeName>
        <fullName evidence="1">NADH dehydrogenase I subunit C</fullName>
    </alternativeName>
    <alternativeName>
        <fullName evidence="1">NDH-1 subunit C</fullName>
    </alternativeName>
</protein>
<evidence type="ECO:0000255" key="1">
    <source>
        <dbReference type="HAMAP-Rule" id="MF_01357"/>
    </source>
</evidence>
<keyword id="KW-0997">Cell inner membrane</keyword>
<keyword id="KW-1003">Cell membrane</keyword>
<keyword id="KW-0472">Membrane</keyword>
<keyword id="KW-0520">NAD</keyword>
<keyword id="KW-0874">Quinone</keyword>
<keyword id="KW-1185">Reference proteome</keyword>
<keyword id="KW-1278">Translocase</keyword>
<keyword id="KW-0813">Transport</keyword>
<keyword id="KW-0830">Ubiquinone</keyword>
<accession>A9MAI1</accession>
<sequence>MSEEALGELSGYIRERLGDAIEEANLAYGELTLCVPVASLIGVLTFLRDDVQCQFVNLTDISGVDYPQREKRFDVVYQLLSPRQNQRIRVKVQADEDTLVPSAVPVFFGAEWYEREAYDMYGILFSGHPDLRRILTDYGFEGHPLRKDFPLTGFVEVRYNDELKRVVYEPVQLRQEFRNFDFLSPWEGTDYVLPGDEKAKTN</sequence>
<organism>
    <name type="scientific">Brucella canis (strain ATCC 23365 / NCTC 10854 / RM-666)</name>
    <dbReference type="NCBI Taxonomy" id="483179"/>
    <lineage>
        <taxon>Bacteria</taxon>
        <taxon>Pseudomonadati</taxon>
        <taxon>Pseudomonadota</taxon>
        <taxon>Alphaproteobacteria</taxon>
        <taxon>Hyphomicrobiales</taxon>
        <taxon>Brucellaceae</taxon>
        <taxon>Brucella/Ochrobactrum group</taxon>
        <taxon>Brucella</taxon>
    </lineage>
</organism>
<name>NUOC_BRUC2</name>
<gene>
    <name evidence="1" type="primary">nuoC</name>
    <name type="ordered locus">BCAN_A0819</name>
</gene>
<reference key="1">
    <citation type="submission" date="2007-10" db="EMBL/GenBank/DDBJ databases">
        <title>Brucella canis ATCC 23365 whole genome shotgun sequencing project.</title>
        <authorList>
            <person name="Setubal J.C."/>
            <person name="Bowns C."/>
            <person name="Boyle S."/>
            <person name="Crasta O.R."/>
            <person name="Czar M.J."/>
            <person name="Dharmanolla C."/>
            <person name="Gillespie J.J."/>
            <person name="Kenyon R.W."/>
            <person name="Lu J."/>
            <person name="Mane S."/>
            <person name="Mohapatra S."/>
            <person name="Nagrani S."/>
            <person name="Purkayastha A."/>
            <person name="Rajasimha H.K."/>
            <person name="Shallom J.M."/>
            <person name="Shallom S."/>
            <person name="Shukla M."/>
            <person name="Snyder E.E."/>
            <person name="Sobral B.W."/>
            <person name="Wattam A.R."/>
            <person name="Will R."/>
            <person name="Williams K."/>
            <person name="Yoo H."/>
            <person name="Bruce D."/>
            <person name="Detter C."/>
            <person name="Munk C."/>
            <person name="Brettin T.S."/>
        </authorList>
    </citation>
    <scope>NUCLEOTIDE SEQUENCE [LARGE SCALE GENOMIC DNA]</scope>
    <source>
        <strain>ATCC 23365 / NCTC 10854 / RM-666</strain>
    </source>
</reference>
<feature type="chain" id="PRO_0000358053" description="NADH-quinone oxidoreductase subunit C">
    <location>
        <begin position="1"/>
        <end position="202"/>
    </location>
</feature>
<comment type="function">
    <text evidence="1">NDH-1 shuttles electrons from NADH, via FMN and iron-sulfur (Fe-S) centers, to quinones in the respiratory chain. The immediate electron acceptor for the enzyme in this species is believed to be ubiquinone. Couples the redox reaction to proton translocation (for every two electrons transferred, four hydrogen ions are translocated across the cytoplasmic membrane), and thus conserves the redox energy in a proton gradient.</text>
</comment>
<comment type="catalytic activity">
    <reaction evidence="1">
        <text>a quinone + NADH + 5 H(+)(in) = a quinol + NAD(+) + 4 H(+)(out)</text>
        <dbReference type="Rhea" id="RHEA:57888"/>
        <dbReference type="ChEBI" id="CHEBI:15378"/>
        <dbReference type="ChEBI" id="CHEBI:24646"/>
        <dbReference type="ChEBI" id="CHEBI:57540"/>
        <dbReference type="ChEBI" id="CHEBI:57945"/>
        <dbReference type="ChEBI" id="CHEBI:132124"/>
    </reaction>
</comment>
<comment type="subunit">
    <text evidence="1">NDH-1 is composed of 14 different subunits. Subunits NuoB, C, D, E, F, and G constitute the peripheral sector of the complex.</text>
</comment>
<comment type="subcellular location">
    <subcellularLocation>
        <location evidence="1">Cell inner membrane</location>
        <topology evidence="1">Peripheral membrane protein</topology>
        <orientation evidence="1">Cytoplasmic side</orientation>
    </subcellularLocation>
</comment>
<comment type="similarity">
    <text evidence="1">Belongs to the complex I 30 kDa subunit family.</text>
</comment>